<feature type="chain" id="PRO_0000402725" description="3-aminoacrylate deaminase RutC">
    <location>
        <begin position="1"/>
        <end position="128"/>
    </location>
</feature>
<proteinExistence type="inferred from homology"/>
<name>RUTC_ECOBD</name>
<evidence type="ECO:0000255" key="1">
    <source>
        <dbReference type="HAMAP-Rule" id="MF_00831"/>
    </source>
</evidence>
<reference key="1">
    <citation type="submission" date="2009-06" db="EMBL/GenBank/DDBJ databases">
        <title>Sequencing and gene expression analysis of Escherichia coli BL21.</title>
        <authorList>
            <person name="Leparc G."/>
            <person name="Striedner G."/>
            <person name="Bayer K."/>
            <person name="Kreil D."/>
            <person name="Krempl P.M."/>
        </authorList>
    </citation>
    <scope>NUCLEOTIDE SEQUENCE [LARGE SCALE GENOMIC DNA]</scope>
    <source>
        <strain>B / BL21-DE3</strain>
    </source>
</reference>
<reference key="2">
    <citation type="submission" date="2009-07" db="EMBL/GenBank/DDBJ databases">
        <title>Complete sequence of Escherichia coli BL21(DE3).</title>
        <authorList>
            <person name="Lucas S."/>
            <person name="Copeland A."/>
            <person name="Lapidus A."/>
            <person name="Glavina del Rio T."/>
            <person name="Dalin E."/>
            <person name="Tice H."/>
            <person name="Bruce D."/>
            <person name="Goodwin L."/>
            <person name="Pitluck S."/>
            <person name="LaButti K.M."/>
            <person name="Clum A."/>
            <person name="Larimer F."/>
            <person name="Land M."/>
            <person name="Hauser L."/>
            <person name="Kyrpides N."/>
            <person name="Anderson I."/>
            <person name="Sorek R."/>
            <person name="Rubin E."/>
        </authorList>
    </citation>
    <scope>NUCLEOTIDE SEQUENCE [LARGE SCALE GENOMIC DNA]</scope>
    <source>
        <strain>B / BL21-DE3</strain>
    </source>
</reference>
<reference key="3">
    <citation type="journal article" date="2009" name="J. Mol. Biol.">
        <title>Genome sequences of Escherichia coli B strains REL606 and BL21(DE3).</title>
        <authorList>
            <person name="Jeong H."/>
            <person name="Barbe V."/>
            <person name="Lee C.H."/>
            <person name="Vallenet D."/>
            <person name="Yu D.S."/>
            <person name="Choi S.H."/>
            <person name="Couloux A."/>
            <person name="Lee S.W."/>
            <person name="Yoon S.H."/>
            <person name="Cattolico L."/>
            <person name="Hur C.G."/>
            <person name="Park H.S."/>
            <person name="Segurens B."/>
            <person name="Kim S.C."/>
            <person name="Oh T.K."/>
            <person name="Lenski R.E."/>
            <person name="Studier F.W."/>
            <person name="Daegelen P."/>
            <person name="Kim J.F."/>
        </authorList>
    </citation>
    <scope>NUCLEOTIDE SEQUENCE [LARGE SCALE GENOMIC DNA]</scope>
    <source>
        <strain>B / BL21-DE3</strain>
    </source>
</reference>
<accession>C6EHJ7</accession>
<accession>C5W2W9</accession>
<gene>
    <name evidence="1" type="primary">rutC</name>
    <name type="ordered locus">ECBD_2584</name>
    <name type="ordered locus">ECD_01013</name>
    <name type="ordered locus">B21_01020</name>
</gene>
<keyword id="KW-0378">Hydrolase</keyword>
<sequence>MPKSVIIPAGSSAPLAPFVPGTLADGVVYVSGTLAFDQHNNVLFADDPKAQTRHVLETIRKVIETAGGTMADVTFNSIFITDWKNYAAINEIYAEFFPGDKPARFCIQCGLVKPDALVEIATIAHIAK</sequence>
<dbReference type="EC" id="3.5.-.-" evidence="1"/>
<dbReference type="EMBL" id="AM946981">
    <property type="protein sequence ID" value="CAQ31537.1"/>
    <property type="molecule type" value="Genomic_DNA"/>
</dbReference>
<dbReference type="EMBL" id="CP001665">
    <property type="protein sequence ID" value="ACT29606.1"/>
    <property type="molecule type" value="Genomic_DNA"/>
</dbReference>
<dbReference type="EMBL" id="CP001509">
    <property type="protein sequence ID" value="ACT42908.1"/>
    <property type="molecule type" value="Genomic_DNA"/>
</dbReference>
<dbReference type="RefSeq" id="WP_001126780.1">
    <property type="nucleotide sequence ID" value="NZ_JADXDS010000001.1"/>
</dbReference>
<dbReference type="SMR" id="C6EHJ7"/>
<dbReference type="GeneID" id="75171086"/>
<dbReference type="KEGG" id="ebd:ECBD_2584"/>
<dbReference type="KEGG" id="ebe:B21_01020"/>
<dbReference type="KEGG" id="ebl:ECD_01013"/>
<dbReference type="PATRIC" id="fig|469008.15.peg.1035"/>
<dbReference type="eggNOG" id="COG0251">
    <property type="taxonomic scope" value="Bacteria"/>
</dbReference>
<dbReference type="HOGENOM" id="CLU_100715_7_3_6"/>
<dbReference type="GO" id="GO:0005829">
    <property type="term" value="C:cytosol"/>
    <property type="evidence" value="ECO:0007669"/>
    <property type="project" value="TreeGrafter"/>
</dbReference>
<dbReference type="GO" id="GO:0019239">
    <property type="term" value="F:deaminase activity"/>
    <property type="evidence" value="ECO:0007669"/>
    <property type="project" value="TreeGrafter"/>
</dbReference>
<dbReference type="GO" id="GO:0019740">
    <property type="term" value="P:nitrogen utilization"/>
    <property type="evidence" value="ECO:0007669"/>
    <property type="project" value="UniProtKB-UniRule"/>
</dbReference>
<dbReference type="GO" id="GO:0006212">
    <property type="term" value="P:uracil catabolic process"/>
    <property type="evidence" value="ECO:0007669"/>
    <property type="project" value="UniProtKB-UniRule"/>
</dbReference>
<dbReference type="CDD" id="cd00448">
    <property type="entry name" value="YjgF_YER057c_UK114_family"/>
    <property type="match status" value="1"/>
</dbReference>
<dbReference type="FunFam" id="3.30.1330.40:FF:000003">
    <property type="entry name" value="Putative aminoacrylate peracid reductase RutC"/>
    <property type="match status" value="1"/>
</dbReference>
<dbReference type="Gene3D" id="3.30.1330.40">
    <property type="entry name" value="RutC-like"/>
    <property type="match status" value="1"/>
</dbReference>
<dbReference type="HAMAP" id="MF_00831">
    <property type="entry name" value="RutC"/>
    <property type="match status" value="1"/>
</dbReference>
<dbReference type="InterPro" id="IPR019897">
    <property type="entry name" value="RidA_CS"/>
</dbReference>
<dbReference type="InterPro" id="IPR019898">
    <property type="entry name" value="RutC"/>
</dbReference>
<dbReference type="InterPro" id="IPR035959">
    <property type="entry name" value="RutC-like_sf"/>
</dbReference>
<dbReference type="InterPro" id="IPR006175">
    <property type="entry name" value="YjgF/YER057c/UK114"/>
</dbReference>
<dbReference type="NCBIfam" id="TIGR03610">
    <property type="entry name" value="RutC"/>
    <property type="match status" value="1"/>
</dbReference>
<dbReference type="PANTHER" id="PTHR11803">
    <property type="entry name" value="2-IMINOBUTANOATE/2-IMINOPROPANOATE DEAMINASE RIDA"/>
    <property type="match status" value="1"/>
</dbReference>
<dbReference type="PANTHER" id="PTHR11803:SF58">
    <property type="entry name" value="PROTEIN HMF1-RELATED"/>
    <property type="match status" value="1"/>
</dbReference>
<dbReference type="Pfam" id="PF01042">
    <property type="entry name" value="Ribonuc_L-PSP"/>
    <property type="match status" value="1"/>
</dbReference>
<dbReference type="SUPFAM" id="SSF55298">
    <property type="entry name" value="YjgF-like"/>
    <property type="match status" value="1"/>
</dbReference>
<dbReference type="PROSITE" id="PS01094">
    <property type="entry name" value="UPF0076"/>
    <property type="match status" value="1"/>
</dbReference>
<comment type="function">
    <text evidence="1">Involved in pyrimidine catabolism. Catalyzes the deamination of 3-aminoacrylate to malonic semialdehyde, a reaction that can also occur spontaneously. RutC may facilitate the reaction and modulate the metabolic fitness, rather than catalyzing essential functions.</text>
</comment>
<comment type="catalytic activity">
    <reaction evidence="1">
        <text>(Z)-3-aminoacrylate + H2O + H(+) = 3-oxopropanoate + NH4(+)</text>
        <dbReference type="Rhea" id="RHEA:34947"/>
        <dbReference type="ChEBI" id="CHEBI:15377"/>
        <dbReference type="ChEBI" id="CHEBI:15378"/>
        <dbReference type="ChEBI" id="CHEBI:28938"/>
        <dbReference type="ChEBI" id="CHEBI:33190"/>
        <dbReference type="ChEBI" id="CHEBI:59894"/>
    </reaction>
</comment>
<comment type="subunit">
    <text evidence="1">Homotrimer.</text>
</comment>
<comment type="similarity">
    <text evidence="1">Belongs to the RutC family.</text>
</comment>
<protein>
    <recommendedName>
        <fullName evidence="1">3-aminoacrylate deaminase RutC</fullName>
        <shortName evidence="1">3-AA deaminase</shortName>
        <ecNumber evidence="1">3.5.-.-</ecNumber>
    </recommendedName>
</protein>
<organism>
    <name type="scientific">Escherichia coli (strain B / BL21-DE3)</name>
    <dbReference type="NCBI Taxonomy" id="469008"/>
    <lineage>
        <taxon>Bacteria</taxon>
        <taxon>Pseudomonadati</taxon>
        <taxon>Pseudomonadota</taxon>
        <taxon>Gammaproteobacteria</taxon>
        <taxon>Enterobacterales</taxon>
        <taxon>Enterobacteriaceae</taxon>
        <taxon>Escherichia</taxon>
    </lineage>
</organism>